<comment type="function">
    <text evidence="1">Regulates the transcription of several operons and genes involved in the biogenesis of Fe-S clusters and Fe-S-containing proteins.</text>
</comment>
<comment type="cofactor">
    <cofactor evidence="1">
        <name>[2Fe-2S] cluster</name>
        <dbReference type="ChEBI" id="CHEBI:190135"/>
    </cofactor>
    <text evidence="1">Binds 1 [2Fe-2S] cluster.</text>
</comment>
<proteinExistence type="inferred from homology"/>
<sequence>MRLTSKGRYAVTAMLDVALNSEAGPVPLADISERQGISLSYLEQLFSRLRKNGLVSSVRGPGGGYLLGKDASSIAVGEVISAVDESVDATRCQGKGGCQGGDKCLTHALWRDLSDRLTGFLNNITLGELVNNQEVLDVSGRQHTHDAPRTRTQDAIDVKLRA</sequence>
<feature type="chain" id="PRO_1000138097" description="HTH-type transcriptional regulator IscR">
    <location>
        <begin position="1"/>
        <end position="162"/>
    </location>
</feature>
<feature type="domain" description="HTH rrf2-type" evidence="1">
    <location>
        <begin position="2"/>
        <end position="131"/>
    </location>
</feature>
<feature type="DNA-binding region" description="H-T-H motif" evidence="1">
    <location>
        <begin position="28"/>
        <end position="51"/>
    </location>
</feature>
<feature type="region of interest" description="Disordered" evidence="2">
    <location>
        <begin position="140"/>
        <end position="162"/>
    </location>
</feature>
<feature type="compositionally biased region" description="Basic and acidic residues" evidence="2">
    <location>
        <begin position="143"/>
        <end position="162"/>
    </location>
</feature>
<feature type="binding site" evidence="1">
    <location>
        <position position="92"/>
    </location>
    <ligand>
        <name>[2Fe-2S] cluster</name>
        <dbReference type="ChEBI" id="CHEBI:190135"/>
    </ligand>
</feature>
<feature type="binding site" evidence="1">
    <location>
        <position position="98"/>
    </location>
    <ligand>
        <name>[2Fe-2S] cluster</name>
        <dbReference type="ChEBI" id="CHEBI:190135"/>
    </ligand>
</feature>
<feature type="binding site" evidence="1">
    <location>
        <position position="104"/>
    </location>
    <ligand>
        <name>[2Fe-2S] cluster</name>
        <dbReference type="ChEBI" id="CHEBI:190135"/>
    </ligand>
</feature>
<evidence type="ECO:0000255" key="1">
    <source>
        <dbReference type="HAMAP-Rule" id="MF_01176"/>
    </source>
</evidence>
<evidence type="ECO:0000256" key="2">
    <source>
        <dbReference type="SAM" id="MobiDB-lite"/>
    </source>
</evidence>
<dbReference type="EMBL" id="CP000948">
    <property type="protein sequence ID" value="ACB03683.1"/>
    <property type="molecule type" value="Genomic_DNA"/>
</dbReference>
<dbReference type="RefSeq" id="WP_001241357.1">
    <property type="nucleotide sequence ID" value="NC_010473.1"/>
</dbReference>
<dbReference type="SMR" id="B1XB06"/>
<dbReference type="GeneID" id="86947421"/>
<dbReference type="KEGG" id="ecd:ECDH10B_2698"/>
<dbReference type="HOGENOM" id="CLU_107144_0_0_6"/>
<dbReference type="GO" id="GO:0005829">
    <property type="term" value="C:cytosol"/>
    <property type="evidence" value="ECO:0007669"/>
    <property type="project" value="TreeGrafter"/>
</dbReference>
<dbReference type="GO" id="GO:0051537">
    <property type="term" value="F:2 iron, 2 sulfur cluster binding"/>
    <property type="evidence" value="ECO:0007669"/>
    <property type="project" value="UniProtKB-KW"/>
</dbReference>
<dbReference type="GO" id="GO:0003700">
    <property type="term" value="F:DNA-binding transcription factor activity"/>
    <property type="evidence" value="ECO:0007669"/>
    <property type="project" value="UniProtKB-UniRule"/>
</dbReference>
<dbReference type="GO" id="GO:0003690">
    <property type="term" value="F:double-stranded DNA binding"/>
    <property type="evidence" value="ECO:0007669"/>
    <property type="project" value="UniProtKB-UniRule"/>
</dbReference>
<dbReference type="GO" id="GO:0005506">
    <property type="term" value="F:iron ion binding"/>
    <property type="evidence" value="ECO:0007669"/>
    <property type="project" value="UniProtKB-UniRule"/>
</dbReference>
<dbReference type="FunFam" id="1.10.10.10:FF:000026">
    <property type="entry name" value="HTH-type transcriptional regulator IscR"/>
    <property type="match status" value="1"/>
</dbReference>
<dbReference type="Gene3D" id="1.10.10.10">
    <property type="entry name" value="Winged helix-like DNA-binding domain superfamily/Winged helix DNA-binding domain"/>
    <property type="match status" value="1"/>
</dbReference>
<dbReference type="HAMAP" id="MF_01176">
    <property type="entry name" value="HTH_type_IscR"/>
    <property type="match status" value="1"/>
</dbReference>
<dbReference type="InterPro" id="IPR010242">
    <property type="entry name" value="TF_HTH_IscR"/>
</dbReference>
<dbReference type="InterPro" id="IPR030489">
    <property type="entry name" value="TR_Rrf2-type_CS"/>
</dbReference>
<dbReference type="InterPro" id="IPR000944">
    <property type="entry name" value="Tscrpt_reg_Rrf2"/>
</dbReference>
<dbReference type="InterPro" id="IPR036388">
    <property type="entry name" value="WH-like_DNA-bd_sf"/>
</dbReference>
<dbReference type="InterPro" id="IPR036390">
    <property type="entry name" value="WH_DNA-bd_sf"/>
</dbReference>
<dbReference type="NCBIfam" id="TIGR02010">
    <property type="entry name" value="IscR"/>
    <property type="match status" value="1"/>
</dbReference>
<dbReference type="NCBIfam" id="NF008110">
    <property type="entry name" value="PRK10857.1"/>
    <property type="match status" value="1"/>
</dbReference>
<dbReference type="NCBIfam" id="TIGR00738">
    <property type="entry name" value="rrf2_super"/>
    <property type="match status" value="1"/>
</dbReference>
<dbReference type="PANTHER" id="PTHR33221:SF5">
    <property type="entry name" value="HTH-TYPE TRANSCRIPTIONAL REGULATOR ISCR"/>
    <property type="match status" value="1"/>
</dbReference>
<dbReference type="PANTHER" id="PTHR33221">
    <property type="entry name" value="WINGED HELIX-TURN-HELIX TRANSCRIPTIONAL REGULATOR, RRF2 FAMILY"/>
    <property type="match status" value="1"/>
</dbReference>
<dbReference type="Pfam" id="PF02082">
    <property type="entry name" value="Rrf2"/>
    <property type="match status" value="1"/>
</dbReference>
<dbReference type="SUPFAM" id="SSF46785">
    <property type="entry name" value="Winged helix' DNA-binding domain"/>
    <property type="match status" value="1"/>
</dbReference>
<dbReference type="PROSITE" id="PS01332">
    <property type="entry name" value="HTH_RRF2_1"/>
    <property type="match status" value="1"/>
</dbReference>
<dbReference type="PROSITE" id="PS51197">
    <property type="entry name" value="HTH_RRF2_2"/>
    <property type="match status" value="1"/>
</dbReference>
<accession>B1XB06</accession>
<gene>
    <name evidence="1" type="primary">iscR</name>
    <name type="ordered locus">ECDH10B_2698</name>
</gene>
<name>ISCR_ECODH</name>
<organism>
    <name type="scientific">Escherichia coli (strain K12 / DH10B)</name>
    <dbReference type="NCBI Taxonomy" id="316385"/>
    <lineage>
        <taxon>Bacteria</taxon>
        <taxon>Pseudomonadati</taxon>
        <taxon>Pseudomonadota</taxon>
        <taxon>Gammaproteobacteria</taxon>
        <taxon>Enterobacterales</taxon>
        <taxon>Enterobacteriaceae</taxon>
        <taxon>Escherichia</taxon>
    </lineage>
</organism>
<protein>
    <recommendedName>
        <fullName evidence="1">HTH-type transcriptional regulator IscR</fullName>
    </recommendedName>
</protein>
<keyword id="KW-0001">2Fe-2S</keyword>
<keyword id="KW-0010">Activator</keyword>
<keyword id="KW-0238">DNA-binding</keyword>
<keyword id="KW-0408">Iron</keyword>
<keyword id="KW-0411">Iron-sulfur</keyword>
<keyword id="KW-0479">Metal-binding</keyword>
<keyword id="KW-0678">Repressor</keyword>
<keyword id="KW-0804">Transcription</keyword>
<keyword id="KW-0805">Transcription regulation</keyword>
<reference key="1">
    <citation type="journal article" date="2008" name="J. Bacteriol.">
        <title>The complete genome sequence of Escherichia coli DH10B: insights into the biology of a laboratory workhorse.</title>
        <authorList>
            <person name="Durfee T."/>
            <person name="Nelson R."/>
            <person name="Baldwin S."/>
            <person name="Plunkett G. III"/>
            <person name="Burland V."/>
            <person name="Mau B."/>
            <person name="Petrosino J.F."/>
            <person name="Qin X."/>
            <person name="Muzny D.M."/>
            <person name="Ayele M."/>
            <person name="Gibbs R.A."/>
            <person name="Csorgo B."/>
            <person name="Posfai G."/>
            <person name="Weinstock G.M."/>
            <person name="Blattner F.R."/>
        </authorList>
    </citation>
    <scope>NUCLEOTIDE SEQUENCE [LARGE SCALE GENOMIC DNA]</scope>
    <source>
        <strain>K12 / DH10B</strain>
    </source>
</reference>